<organism>
    <name type="scientific">Heloderma suspectum</name>
    <name type="common">Gila monster</name>
    <dbReference type="NCBI Taxonomy" id="8554"/>
    <lineage>
        <taxon>Eukaryota</taxon>
        <taxon>Metazoa</taxon>
        <taxon>Chordata</taxon>
        <taxon>Craniata</taxon>
        <taxon>Vertebrata</taxon>
        <taxon>Euteleostomi</taxon>
        <taxon>Lepidosauria</taxon>
        <taxon>Squamata</taxon>
        <taxon>Bifurcata</taxon>
        <taxon>Unidentata</taxon>
        <taxon>Episquamata</taxon>
        <taxon>Toxicofera</taxon>
        <taxon>Anguimorpha</taxon>
        <taxon>Neoanguimorpha</taxon>
        <taxon>Helodermatidae</taxon>
        <taxon>Heloderma</taxon>
    </lineage>
</organism>
<proteinExistence type="evidence at transcript level"/>
<accession>O12956</accession>
<accession>O12955</accession>
<comment type="function">
    <molecule>Glucagon</molecule>
    <text evidence="2">Plays a key role in glucose metabolism and homeostasis. Regulates blood glucose by increasing gluconeogenesis and decreasing glycolysis.</text>
</comment>
<comment type="function">
    <molecule>Glucagon-like peptide 1</molecule>
    <text evidence="2">Potent stimulator of glucose-dependent insulin release. Plays important roles on gastric motility and the suppression of plasma glucagon levels.</text>
</comment>
<comment type="function">
    <molecule>Glucagon-like peptide 2</molecule>
    <text evidence="2">Stimulates intestinal growth and up-regulates villus height in the small intestine, concomitant with increased crypt cell proliferation and decreased enterocyte apoptosis.</text>
</comment>
<comment type="subcellular location">
    <subcellularLocation>
        <location>Secreted</location>
    </subcellularLocation>
</comment>
<comment type="alternative products">
    <event type="alternative splicing"/>
    <isoform>
        <id>O12956-1</id>
        <name>LPII</name>
        <sequence type="displayed"/>
    </isoform>
    <isoform>
        <id>O12956-2</id>
        <name>LPI</name>
        <sequence type="described" ref="VSP_001756 VSP_001757"/>
    </isoform>
</comment>
<comment type="tissue specificity">
    <text evidence="6">Isoform LPII is expressed in both pancreas and intestine. Expression of isoform LPI is restricted to the pancreas. Neither isoform is detected in salivary glands.</text>
</comment>
<comment type="induction">
    <text>Produced in the A cells of the islets of Langerhans in response to a drop in blood sugar concentration.</text>
</comment>
<comment type="similarity">
    <text evidence="8">Belongs to the glucagon family.</text>
</comment>
<sequence length="204" mass="23553">MTSMYFVAGLLLMIVQGSWQSPLQETEEKSRSFKASQAEPLDDSRQLNEVKRHSQGTFTSDYSKYLDTRRAQDFVQWLMNTKRSGQQGVEEREKENLLDQLSSNGLARHHAEYERHADGRYTSDISSYLEGQAAKEFIAWLVNGRGRRDFLEEAGTADDIGRRHADGTFTSDYNQLLDDIATQEFLKWLINQKVTQRDLLGEYQ</sequence>
<evidence type="ECO:0000250" key="1"/>
<evidence type="ECO:0000250" key="2">
    <source>
        <dbReference type="UniProtKB" id="P01275"/>
    </source>
</evidence>
<evidence type="ECO:0000250" key="3">
    <source>
        <dbReference type="UniProtKB" id="P09686"/>
    </source>
</evidence>
<evidence type="ECO:0000250" key="4">
    <source>
        <dbReference type="UniProtKB" id="P15438"/>
    </source>
</evidence>
<evidence type="ECO:0000255" key="5"/>
<evidence type="ECO:0000269" key="6">
    <source>
    </source>
</evidence>
<evidence type="ECO:0000303" key="7">
    <source>
    </source>
</evidence>
<evidence type="ECO:0000305" key="8"/>
<protein>
    <recommendedName>
        <fullName>Pro-glucagon</fullName>
    </recommendedName>
    <component>
        <recommendedName>
            <fullName>Glicentin-related polypeptide</fullName>
            <shortName>GRPP</shortName>
        </recommendedName>
    </component>
    <component>
        <recommendedName>
            <fullName>Glucagon</fullName>
        </recommendedName>
    </component>
    <component>
        <recommendedName>
            <fullName>Glucagon-like peptide 1</fullName>
            <shortName>GLP-1</shortName>
        </recommendedName>
    </component>
    <component>
        <recommendedName>
            <fullName>Glucagon-like peptide 1(7-37)</fullName>
            <shortName>GLP-1(7-37)</shortName>
        </recommendedName>
    </component>
    <component>
        <recommendedName>
            <fullName>Glucagon-like peptide 1(7-36)</fullName>
            <shortName>GLP-1(7-36)</shortName>
        </recommendedName>
    </component>
    <component>
        <recommendedName>
            <fullName>Glucagon-like peptide 2</fullName>
            <shortName>GLP-2</shortName>
        </recommendedName>
    </component>
</protein>
<name>GLUC_HELSU</name>
<keyword id="KW-0025">Alternative splicing</keyword>
<keyword id="KW-0027">Amidation</keyword>
<keyword id="KW-0165">Cleavage on pair of basic residues</keyword>
<keyword id="KW-0372">Hormone</keyword>
<keyword id="KW-0964">Secreted</keyword>
<keyword id="KW-0732">Signal</keyword>
<reference key="1">
    <citation type="journal article" date="1997" name="J. Biol. Chem.">
        <title>Tissue-specific expression of unique mRNAs that encode proglucagon-derived peptides or exendin 4 in the lizard.</title>
        <authorList>
            <person name="Chen Y.E."/>
            <person name="Drucker D.J."/>
        </authorList>
    </citation>
    <scope>NUCLEOTIDE SEQUENCE [MRNA] (ISOFORMS LPI AND LPII)</scope>
    <scope>TISSUE SPECIFICITY</scope>
    <source>
        <tissue>Intestine</tissue>
        <tissue>Pancreas</tissue>
    </source>
</reference>
<reference key="2">
    <citation type="journal article" date="1998" name="J. Biol. Chem.">
        <title>Molecular cloning of the helodermin and exendin-4 cDNAs in the lizard. Relationship to vasoactive intestinal polypeptide/pituitary adenylate cyclase activating polypeptide and glucagon-like peptide 1 and evidence against the existence of mammalian homologues.</title>
        <authorList>
            <person name="Pohl M."/>
            <person name="Wank S.A."/>
        </authorList>
    </citation>
    <scope>NUCLEOTIDE SEQUENCE [MRNA] OF 65-81 AND 110-132</scope>
    <source>
        <tissue>Lung</tissue>
    </source>
</reference>
<reference key="3">
    <citation type="journal article" date="2003" name="Mol. Endocrinol.">
        <title>Glucagon-like peptides: regulators of cell proliferation, differentiation, and apoptosis.</title>
        <authorList>
            <person name="Drucker D.J."/>
        </authorList>
    </citation>
    <scope>REVIEW</scope>
</reference>
<reference key="4">
    <citation type="journal article" date="2003" name="Am. J. Physiol.">
        <title>Glucagon and regulation of glucose metabolism.</title>
        <authorList>
            <person name="Jiang G."/>
            <person name="Zhang B.B."/>
        </authorList>
    </citation>
    <scope>REVIEW</scope>
</reference>
<reference key="5">
    <citation type="journal article" date="1999" name="Trends Endocrinol. Metab.">
        <title>Glucagon-like peptide 2.</title>
        <authorList>
            <person name="Drucker D.J."/>
        </authorList>
    </citation>
    <scope>REVIEW</scope>
</reference>
<reference key="6">
    <citation type="journal article" date="1999" name="Endocr. Rev.">
        <title>The glucagon-like peptides.</title>
        <authorList>
            <person name="Kieffer T.J."/>
            <person name="Habener J.F."/>
        </authorList>
    </citation>
    <scope>REVIEW</scope>
</reference>
<feature type="signal peptide" evidence="5">
    <location>
        <begin position="1"/>
        <end position="20"/>
    </location>
</feature>
<feature type="peptide" id="PRO_0000011410" description="Glicentin-related polypeptide" evidence="3">
    <location>
        <begin position="21"/>
        <end position="50"/>
    </location>
</feature>
<feature type="peptide" id="PRO_0000011411" description="Glucagon" evidence="2">
    <location>
        <begin position="53"/>
        <end position="81"/>
    </location>
</feature>
<feature type="propeptide" id="PRO_0000011412" evidence="2">
    <location>
        <begin position="84"/>
        <end position="109"/>
    </location>
</feature>
<feature type="peptide" id="PRO_0000011413" description="Glucagon-like peptide 1" evidence="2">
    <location>
        <begin position="110"/>
        <end position="146"/>
    </location>
</feature>
<feature type="peptide" id="PRO_0000011414" description="Glucagon-like peptide 1(7-37)" evidence="2">
    <location>
        <begin position="116"/>
        <end position="146"/>
    </location>
</feature>
<feature type="peptide" id="PRO_0000011415" description="Glucagon-like peptide 1(7-36)" evidence="2">
    <location>
        <begin position="116"/>
        <end position="145"/>
    </location>
</feature>
<feature type="propeptide" id="PRO_0000011416" evidence="4">
    <location>
        <begin position="149"/>
        <end position="161"/>
    </location>
</feature>
<feature type="peptide" id="PRO_0000011417" description="Glucagon-like peptide 2" evidence="4">
    <location>
        <begin position="164"/>
        <end position="196"/>
    </location>
</feature>
<feature type="propeptide" id="PRO_0000011418" evidence="4">
    <location>
        <begin position="197"/>
        <end position="204"/>
    </location>
</feature>
<feature type="site" description="Cleavage; by PCSK2" evidence="1">
    <location>
        <begin position="52"/>
        <end position="53"/>
    </location>
</feature>
<feature type="site" description="Cleavage; by PCSK1 and PCSK2" evidence="1">
    <location>
        <begin position="83"/>
        <end position="84"/>
    </location>
</feature>
<feature type="site" description="Cleavage; by PCSK1" evidence="1">
    <location>
        <begin position="115"/>
        <end position="116"/>
    </location>
</feature>
<feature type="site" description="Cleavage; by PCSK1" evidence="1">
    <location>
        <begin position="148"/>
        <end position="149"/>
    </location>
</feature>
<feature type="site" description="Cleavage; by PCSK1" evidence="1">
    <location>
        <begin position="163"/>
        <end position="164"/>
    </location>
</feature>
<feature type="modified residue" description="Arginine amide" evidence="1">
    <location>
        <position position="145"/>
    </location>
</feature>
<feature type="splice variant" id="VSP_001756" description="In isoform LPI." evidence="7">
    <original>D</original>
    <variation>E</variation>
    <location>
        <position position="149"/>
    </location>
</feature>
<feature type="splice variant" id="VSP_001757" description="In isoform LPI." evidence="7">
    <location>
        <begin position="150"/>
        <end position="204"/>
    </location>
</feature>
<feature type="sequence conflict" description="In Ref. 2; no nucleotide entry." evidence="8" ref="2">
    <original>R</original>
    <variation>T</variation>
    <location>
        <position position="120"/>
    </location>
</feature>
<gene>
    <name type="primary">GCG</name>
</gene>
<dbReference type="EMBL" id="U77612">
    <property type="protein sequence ID" value="AAB51129.1"/>
    <property type="molecule type" value="mRNA"/>
</dbReference>
<dbReference type="EMBL" id="U77611">
    <property type="protein sequence ID" value="AAB51128.1"/>
    <property type="molecule type" value="mRNA"/>
</dbReference>
<dbReference type="SMR" id="O12956"/>
<dbReference type="GO" id="GO:0005615">
    <property type="term" value="C:extracellular space"/>
    <property type="evidence" value="ECO:0007669"/>
    <property type="project" value="TreeGrafter"/>
</dbReference>
<dbReference type="GO" id="GO:0031769">
    <property type="term" value="F:glucagon receptor binding"/>
    <property type="evidence" value="ECO:0007669"/>
    <property type="project" value="TreeGrafter"/>
</dbReference>
<dbReference type="GO" id="GO:0005179">
    <property type="term" value="F:hormone activity"/>
    <property type="evidence" value="ECO:0007669"/>
    <property type="project" value="UniProtKB-KW"/>
</dbReference>
<dbReference type="GO" id="GO:0007188">
    <property type="term" value="P:adenylate cyclase-modulating G protein-coupled receptor signaling pathway"/>
    <property type="evidence" value="ECO:0007669"/>
    <property type="project" value="TreeGrafter"/>
</dbReference>
<dbReference type="GO" id="GO:0043066">
    <property type="term" value="P:negative regulation of apoptotic process"/>
    <property type="evidence" value="ECO:0007669"/>
    <property type="project" value="TreeGrafter"/>
</dbReference>
<dbReference type="GO" id="GO:0035774">
    <property type="term" value="P:positive regulation of insulin secretion involved in cellular response to glucose stimulus"/>
    <property type="evidence" value="ECO:0007669"/>
    <property type="project" value="TreeGrafter"/>
</dbReference>
<dbReference type="GO" id="GO:0010737">
    <property type="term" value="P:protein kinase A signaling"/>
    <property type="evidence" value="ECO:0007669"/>
    <property type="project" value="TreeGrafter"/>
</dbReference>
<dbReference type="Gene3D" id="6.10.250.590">
    <property type="match status" value="3"/>
</dbReference>
<dbReference type="InterPro" id="IPR015550">
    <property type="entry name" value="Glucagon"/>
</dbReference>
<dbReference type="InterPro" id="IPR000532">
    <property type="entry name" value="Glucagon_GIP_secretin_VIP"/>
</dbReference>
<dbReference type="PANTHER" id="PTHR11418">
    <property type="entry name" value="GLUCAGON"/>
    <property type="match status" value="1"/>
</dbReference>
<dbReference type="PANTHER" id="PTHR11418:SF0">
    <property type="entry name" value="PRO-GLUCAGON"/>
    <property type="match status" value="1"/>
</dbReference>
<dbReference type="Pfam" id="PF00123">
    <property type="entry name" value="Hormone_2"/>
    <property type="match status" value="3"/>
</dbReference>
<dbReference type="PIRSF" id="PIRSF037818">
    <property type="entry name" value="Glucagon"/>
    <property type="match status" value="1"/>
</dbReference>
<dbReference type="PRINTS" id="PR00275">
    <property type="entry name" value="GLUCAGON"/>
</dbReference>
<dbReference type="SMART" id="SM00070">
    <property type="entry name" value="GLUCA"/>
    <property type="match status" value="3"/>
</dbReference>
<dbReference type="PROSITE" id="PS00260">
    <property type="entry name" value="GLUCAGON"/>
    <property type="match status" value="2"/>
</dbReference>